<reference key="1">
    <citation type="journal article" date="2007" name="PLoS Genet.">
        <title>The complete genome sequence of Yersinia pseudotuberculosis IP31758, the causative agent of Far East scarlet-like fever.</title>
        <authorList>
            <person name="Eppinger M."/>
            <person name="Rosovitz M.J."/>
            <person name="Fricke W.F."/>
            <person name="Rasko D.A."/>
            <person name="Kokorina G."/>
            <person name="Fayolle C."/>
            <person name="Lindler L.E."/>
            <person name="Carniel E."/>
            <person name="Ravel J."/>
        </authorList>
    </citation>
    <scope>NUCLEOTIDE SEQUENCE [LARGE SCALE GENOMIC DNA]</scope>
    <source>
        <strain>IP 31758</strain>
    </source>
</reference>
<proteinExistence type="inferred from homology"/>
<gene>
    <name evidence="1" type="primary">tusD</name>
    <name type="ordered locus">YpsIP31758_3924</name>
</gene>
<keyword id="KW-0963">Cytoplasm</keyword>
<keyword id="KW-0808">Transferase</keyword>
<keyword id="KW-0819">tRNA processing</keyword>
<comment type="function">
    <text evidence="1">Part of a sulfur-relay system required for 2-thiolation of 5-methylaminomethyl-2-thiouridine (mnm(5)s(2)U) at tRNA wobble positions. Accepts sulfur from TusA and transfers it in turn to TusE.</text>
</comment>
<comment type="subunit">
    <text evidence="1">Heterohexamer, formed by a dimer of trimers. The hexameric TusBCD complex contains 2 copies each of TusB, TusC and TusD. The TusBCD complex interacts with TusE.</text>
</comment>
<comment type="subcellular location">
    <subcellularLocation>
        <location evidence="1">Cytoplasm</location>
    </subcellularLocation>
</comment>
<comment type="similarity">
    <text evidence="1">Belongs to the DsrE/TusD family.</text>
</comment>
<sequence length="131" mass="13959">MSALKYCLLVTGPAYGTQQASSAYQFAQAVVGAGHHLVSIFFYREGVLNANQLTAPASDEFDLVRAWQQLAAEQAVTLNVCVAAALRRGITDQHEAEQLNLAAANLQPGFTLSGLGALAEATLTCDRMVQF</sequence>
<dbReference type="EC" id="2.8.1.-" evidence="1"/>
<dbReference type="EMBL" id="CP000720">
    <property type="protein sequence ID" value="ABS48949.1"/>
    <property type="molecule type" value="Genomic_DNA"/>
</dbReference>
<dbReference type="RefSeq" id="WP_002212320.1">
    <property type="nucleotide sequence ID" value="NC_009708.1"/>
</dbReference>
<dbReference type="SMR" id="A7FNP4"/>
<dbReference type="GeneID" id="57974406"/>
<dbReference type="KEGG" id="ypi:YpsIP31758_3924"/>
<dbReference type="HOGENOM" id="CLU_132095_0_0_6"/>
<dbReference type="Proteomes" id="UP000002412">
    <property type="component" value="Chromosome"/>
</dbReference>
<dbReference type="GO" id="GO:1990228">
    <property type="term" value="C:sulfurtransferase complex"/>
    <property type="evidence" value="ECO:0007669"/>
    <property type="project" value="TreeGrafter"/>
</dbReference>
<dbReference type="GO" id="GO:0097163">
    <property type="term" value="F:sulfur carrier activity"/>
    <property type="evidence" value="ECO:0007669"/>
    <property type="project" value="TreeGrafter"/>
</dbReference>
<dbReference type="GO" id="GO:0016783">
    <property type="term" value="F:sulfurtransferase activity"/>
    <property type="evidence" value="ECO:0007669"/>
    <property type="project" value="UniProtKB-UniRule"/>
</dbReference>
<dbReference type="GO" id="GO:0002143">
    <property type="term" value="P:tRNA wobble position uridine thiolation"/>
    <property type="evidence" value="ECO:0007669"/>
    <property type="project" value="TreeGrafter"/>
</dbReference>
<dbReference type="FunFam" id="3.40.1260.10:FF:000001">
    <property type="entry name" value="Sulfurtransferase TusD"/>
    <property type="match status" value="1"/>
</dbReference>
<dbReference type="Gene3D" id="3.40.1260.10">
    <property type="entry name" value="DsrEFH-like"/>
    <property type="match status" value="1"/>
</dbReference>
<dbReference type="HAMAP" id="MF_00390">
    <property type="entry name" value="Thiourid_synth_D"/>
    <property type="match status" value="1"/>
</dbReference>
<dbReference type="InterPro" id="IPR027396">
    <property type="entry name" value="DsrEFH-like"/>
</dbReference>
<dbReference type="InterPro" id="IPR003787">
    <property type="entry name" value="Sulphur_relay_DsrE/F-like"/>
</dbReference>
<dbReference type="InterPro" id="IPR017463">
    <property type="entry name" value="Sulphur_relay_TusD/DsrE"/>
</dbReference>
<dbReference type="NCBIfam" id="NF001237">
    <property type="entry name" value="PRK00207.1"/>
    <property type="match status" value="1"/>
</dbReference>
<dbReference type="NCBIfam" id="TIGR03012">
    <property type="entry name" value="sulf_tusD_dsrE"/>
    <property type="match status" value="1"/>
</dbReference>
<dbReference type="PANTHER" id="PTHR34874">
    <property type="entry name" value="PROTEIN YCHN"/>
    <property type="match status" value="1"/>
</dbReference>
<dbReference type="PANTHER" id="PTHR34874:SF3">
    <property type="entry name" value="SULFURTRANSFERASE TUSD"/>
    <property type="match status" value="1"/>
</dbReference>
<dbReference type="Pfam" id="PF02635">
    <property type="entry name" value="DsrE"/>
    <property type="match status" value="1"/>
</dbReference>
<dbReference type="SUPFAM" id="SSF75169">
    <property type="entry name" value="DsrEFH-like"/>
    <property type="match status" value="1"/>
</dbReference>
<name>TUSD_YERP3</name>
<protein>
    <recommendedName>
        <fullName evidence="1">Sulfurtransferase TusD</fullName>
        <ecNumber evidence="1">2.8.1.-</ecNumber>
    </recommendedName>
    <alternativeName>
        <fullName evidence="1">tRNA 2-thiouridine synthesizing protein D</fullName>
    </alternativeName>
</protein>
<accession>A7FNP4</accession>
<organism>
    <name type="scientific">Yersinia pseudotuberculosis serotype O:1b (strain IP 31758)</name>
    <dbReference type="NCBI Taxonomy" id="349747"/>
    <lineage>
        <taxon>Bacteria</taxon>
        <taxon>Pseudomonadati</taxon>
        <taxon>Pseudomonadota</taxon>
        <taxon>Gammaproteobacteria</taxon>
        <taxon>Enterobacterales</taxon>
        <taxon>Yersiniaceae</taxon>
        <taxon>Yersinia</taxon>
    </lineage>
</organism>
<evidence type="ECO:0000255" key="1">
    <source>
        <dbReference type="HAMAP-Rule" id="MF_00390"/>
    </source>
</evidence>
<feature type="chain" id="PRO_1000060749" description="Sulfurtransferase TusD">
    <location>
        <begin position="1"/>
        <end position="131"/>
    </location>
</feature>
<feature type="active site" description="Cysteine persulfide intermediate" evidence="1">
    <location>
        <position position="81"/>
    </location>
</feature>